<protein>
    <recommendedName>
        <fullName evidence="1">Peptidyl-tRNA hydrolase</fullName>
        <shortName evidence="1">Pth</shortName>
        <ecNumber evidence="1">3.1.1.29</ecNumber>
    </recommendedName>
</protein>
<proteinExistence type="inferred from homology"/>
<sequence>MKYLIVGLGNIGPEYHETRHNIGFMVLDALARANNLSFTDGRYGFTTTLSVKGRQMILLKPSTFMNLSGNAVRYWMQKENIPLENVLIIVDDLALPFGTLRLKSKGSDAGHNGLKHIATILGTQNYARLRFGIGNDFPRGGQIDFVLGHFTDEDWKTMDERLETAGEIAKSFCLAGIDITMNQFNKK</sequence>
<organism>
    <name type="scientific">Bacteroides fragilis (strain YCH46)</name>
    <dbReference type="NCBI Taxonomy" id="295405"/>
    <lineage>
        <taxon>Bacteria</taxon>
        <taxon>Pseudomonadati</taxon>
        <taxon>Bacteroidota</taxon>
        <taxon>Bacteroidia</taxon>
        <taxon>Bacteroidales</taxon>
        <taxon>Bacteroidaceae</taxon>
        <taxon>Bacteroides</taxon>
    </lineage>
</organism>
<comment type="function">
    <text evidence="1">Hydrolyzes ribosome-free peptidyl-tRNAs (with 1 or more amino acids incorporated), which drop off the ribosome during protein synthesis, or as a result of ribosome stalling.</text>
</comment>
<comment type="function">
    <text evidence="1">Catalyzes the release of premature peptidyl moieties from peptidyl-tRNA molecules trapped in stalled 50S ribosomal subunits, and thus maintains levels of free tRNAs and 50S ribosomes.</text>
</comment>
<comment type="catalytic activity">
    <reaction evidence="1">
        <text>an N-acyl-L-alpha-aminoacyl-tRNA + H2O = an N-acyl-L-amino acid + a tRNA + H(+)</text>
        <dbReference type="Rhea" id="RHEA:54448"/>
        <dbReference type="Rhea" id="RHEA-COMP:10123"/>
        <dbReference type="Rhea" id="RHEA-COMP:13883"/>
        <dbReference type="ChEBI" id="CHEBI:15377"/>
        <dbReference type="ChEBI" id="CHEBI:15378"/>
        <dbReference type="ChEBI" id="CHEBI:59874"/>
        <dbReference type="ChEBI" id="CHEBI:78442"/>
        <dbReference type="ChEBI" id="CHEBI:138191"/>
        <dbReference type="EC" id="3.1.1.29"/>
    </reaction>
</comment>
<comment type="subunit">
    <text evidence="1">Monomer.</text>
</comment>
<comment type="subcellular location">
    <subcellularLocation>
        <location evidence="1">Cytoplasm</location>
    </subcellularLocation>
</comment>
<comment type="similarity">
    <text evidence="1">Belongs to the PTH family.</text>
</comment>
<feature type="chain" id="PRO_0000187687" description="Peptidyl-tRNA hydrolase">
    <location>
        <begin position="1"/>
        <end position="187"/>
    </location>
</feature>
<feature type="active site" description="Proton acceptor" evidence="1">
    <location>
        <position position="20"/>
    </location>
</feature>
<feature type="binding site" evidence="1">
    <location>
        <position position="15"/>
    </location>
    <ligand>
        <name>tRNA</name>
        <dbReference type="ChEBI" id="CHEBI:17843"/>
    </ligand>
</feature>
<feature type="binding site" evidence="1">
    <location>
        <position position="64"/>
    </location>
    <ligand>
        <name>tRNA</name>
        <dbReference type="ChEBI" id="CHEBI:17843"/>
    </ligand>
</feature>
<feature type="binding site" evidence="1">
    <location>
        <position position="66"/>
    </location>
    <ligand>
        <name>tRNA</name>
        <dbReference type="ChEBI" id="CHEBI:17843"/>
    </ligand>
</feature>
<feature type="binding site" evidence="1">
    <location>
        <position position="112"/>
    </location>
    <ligand>
        <name>tRNA</name>
        <dbReference type="ChEBI" id="CHEBI:17843"/>
    </ligand>
</feature>
<feature type="site" description="Discriminates between blocked and unblocked aminoacyl-tRNA" evidence="1">
    <location>
        <position position="10"/>
    </location>
</feature>
<feature type="site" description="Stabilizes the basic form of H active site to accept a proton" evidence="1">
    <location>
        <position position="91"/>
    </location>
</feature>
<keyword id="KW-0963">Cytoplasm</keyword>
<keyword id="KW-0378">Hydrolase</keyword>
<keyword id="KW-0694">RNA-binding</keyword>
<keyword id="KW-0820">tRNA-binding</keyword>
<accession>Q64X30</accession>
<gene>
    <name evidence="1" type="primary">pth</name>
    <name type="ordered locus">BF1196</name>
</gene>
<dbReference type="EC" id="3.1.1.29" evidence="1"/>
<dbReference type="EMBL" id="AP006841">
    <property type="protein sequence ID" value="BAD47946.1"/>
    <property type="molecule type" value="Genomic_DNA"/>
</dbReference>
<dbReference type="RefSeq" id="WP_005785758.1">
    <property type="nucleotide sequence ID" value="NZ_UYXF01000002.1"/>
</dbReference>
<dbReference type="RefSeq" id="YP_098480.1">
    <property type="nucleotide sequence ID" value="NC_006347.1"/>
</dbReference>
<dbReference type="SMR" id="Q64X30"/>
<dbReference type="STRING" id="295405.BF1196"/>
<dbReference type="GeneID" id="60366091"/>
<dbReference type="KEGG" id="bfr:BF1196"/>
<dbReference type="PATRIC" id="fig|295405.11.peg.1184"/>
<dbReference type="HOGENOM" id="CLU_062456_4_1_10"/>
<dbReference type="OrthoDB" id="9800507at2"/>
<dbReference type="Proteomes" id="UP000002197">
    <property type="component" value="Chromosome"/>
</dbReference>
<dbReference type="GO" id="GO:0005737">
    <property type="term" value="C:cytoplasm"/>
    <property type="evidence" value="ECO:0007669"/>
    <property type="project" value="UniProtKB-SubCell"/>
</dbReference>
<dbReference type="GO" id="GO:0004045">
    <property type="term" value="F:peptidyl-tRNA hydrolase activity"/>
    <property type="evidence" value="ECO:0007669"/>
    <property type="project" value="UniProtKB-UniRule"/>
</dbReference>
<dbReference type="GO" id="GO:0000049">
    <property type="term" value="F:tRNA binding"/>
    <property type="evidence" value="ECO:0007669"/>
    <property type="project" value="UniProtKB-UniRule"/>
</dbReference>
<dbReference type="GO" id="GO:0006515">
    <property type="term" value="P:protein quality control for misfolded or incompletely synthesized proteins"/>
    <property type="evidence" value="ECO:0007669"/>
    <property type="project" value="UniProtKB-UniRule"/>
</dbReference>
<dbReference type="GO" id="GO:0072344">
    <property type="term" value="P:rescue of stalled ribosome"/>
    <property type="evidence" value="ECO:0007669"/>
    <property type="project" value="UniProtKB-UniRule"/>
</dbReference>
<dbReference type="CDD" id="cd00462">
    <property type="entry name" value="PTH"/>
    <property type="match status" value="1"/>
</dbReference>
<dbReference type="FunFam" id="3.40.50.1470:FF:000001">
    <property type="entry name" value="Peptidyl-tRNA hydrolase"/>
    <property type="match status" value="1"/>
</dbReference>
<dbReference type="Gene3D" id="3.40.50.1470">
    <property type="entry name" value="Peptidyl-tRNA hydrolase"/>
    <property type="match status" value="1"/>
</dbReference>
<dbReference type="HAMAP" id="MF_00083">
    <property type="entry name" value="Pept_tRNA_hydro_bact"/>
    <property type="match status" value="1"/>
</dbReference>
<dbReference type="InterPro" id="IPR001328">
    <property type="entry name" value="Pept_tRNA_hydro"/>
</dbReference>
<dbReference type="InterPro" id="IPR018171">
    <property type="entry name" value="Pept_tRNA_hydro_CS"/>
</dbReference>
<dbReference type="InterPro" id="IPR036416">
    <property type="entry name" value="Pept_tRNA_hydro_sf"/>
</dbReference>
<dbReference type="NCBIfam" id="TIGR00447">
    <property type="entry name" value="pth"/>
    <property type="match status" value="1"/>
</dbReference>
<dbReference type="PANTHER" id="PTHR17224">
    <property type="entry name" value="PEPTIDYL-TRNA HYDROLASE"/>
    <property type="match status" value="1"/>
</dbReference>
<dbReference type="PANTHER" id="PTHR17224:SF1">
    <property type="entry name" value="PEPTIDYL-TRNA HYDROLASE"/>
    <property type="match status" value="1"/>
</dbReference>
<dbReference type="Pfam" id="PF01195">
    <property type="entry name" value="Pept_tRNA_hydro"/>
    <property type="match status" value="1"/>
</dbReference>
<dbReference type="SUPFAM" id="SSF53178">
    <property type="entry name" value="Peptidyl-tRNA hydrolase-like"/>
    <property type="match status" value="1"/>
</dbReference>
<dbReference type="PROSITE" id="PS01195">
    <property type="entry name" value="PEPT_TRNA_HYDROL_1"/>
    <property type="match status" value="1"/>
</dbReference>
<reference key="1">
    <citation type="journal article" date="2004" name="Proc. Natl. Acad. Sci. U.S.A.">
        <title>Genomic analysis of Bacteroides fragilis reveals extensive DNA inversions regulating cell surface adaptation.</title>
        <authorList>
            <person name="Kuwahara T."/>
            <person name="Yamashita A."/>
            <person name="Hirakawa H."/>
            <person name="Nakayama H."/>
            <person name="Toh H."/>
            <person name="Okada N."/>
            <person name="Kuhara S."/>
            <person name="Hattori M."/>
            <person name="Hayashi T."/>
            <person name="Ohnishi Y."/>
        </authorList>
    </citation>
    <scope>NUCLEOTIDE SEQUENCE [LARGE SCALE GENOMIC DNA]</scope>
    <source>
        <strain>YCH46</strain>
    </source>
</reference>
<name>PTH_BACFR</name>
<evidence type="ECO:0000255" key="1">
    <source>
        <dbReference type="HAMAP-Rule" id="MF_00083"/>
    </source>
</evidence>